<dbReference type="EC" id="6.1.1.11" evidence="1"/>
<dbReference type="EMBL" id="AJ248287">
    <property type="protein sequence ID" value="CAB50241.1"/>
    <property type="molecule type" value="Genomic_DNA"/>
</dbReference>
<dbReference type="EMBL" id="HE613800">
    <property type="protein sequence ID" value="CCE70778.1"/>
    <property type="molecule type" value="Genomic_DNA"/>
</dbReference>
<dbReference type="PIR" id="D75043">
    <property type="entry name" value="D75043"/>
</dbReference>
<dbReference type="RefSeq" id="WP_010868451.1">
    <property type="nucleotide sequence ID" value="NC_000868.1"/>
</dbReference>
<dbReference type="SMR" id="Q9UZ21"/>
<dbReference type="STRING" id="272844.PAB0881"/>
<dbReference type="KEGG" id="pab:PAB0881"/>
<dbReference type="PATRIC" id="fig|272844.11.peg.1421"/>
<dbReference type="eggNOG" id="arCOG00403">
    <property type="taxonomic scope" value="Archaea"/>
</dbReference>
<dbReference type="HOGENOM" id="CLU_023797_0_1_2"/>
<dbReference type="OrthoDB" id="35932at2157"/>
<dbReference type="PhylomeDB" id="Q9UZ21"/>
<dbReference type="UniPathway" id="UPA00906">
    <property type="reaction ID" value="UER00895"/>
</dbReference>
<dbReference type="Proteomes" id="UP000000810">
    <property type="component" value="Chromosome"/>
</dbReference>
<dbReference type="Proteomes" id="UP000009139">
    <property type="component" value="Chromosome"/>
</dbReference>
<dbReference type="GO" id="GO:0005737">
    <property type="term" value="C:cytoplasm"/>
    <property type="evidence" value="ECO:0007669"/>
    <property type="project" value="UniProtKB-SubCell"/>
</dbReference>
<dbReference type="GO" id="GO:0005524">
    <property type="term" value="F:ATP binding"/>
    <property type="evidence" value="ECO:0007669"/>
    <property type="project" value="UniProtKB-UniRule"/>
</dbReference>
<dbReference type="GO" id="GO:0004828">
    <property type="term" value="F:serine-tRNA ligase activity"/>
    <property type="evidence" value="ECO:0007669"/>
    <property type="project" value="UniProtKB-UniRule"/>
</dbReference>
<dbReference type="GO" id="GO:0016260">
    <property type="term" value="P:selenocysteine biosynthetic process"/>
    <property type="evidence" value="ECO:0007669"/>
    <property type="project" value="UniProtKB-UniRule"/>
</dbReference>
<dbReference type="GO" id="GO:0006434">
    <property type="term" value="P:seryl-tRNA aminoacylation"/>
    <property type="evidence" value="ECO:0007669"/>
    <property type="project" value="UniProtKB-UniRule"/>
</dbReference>
<dbReference type="CDD" id="cd00770">
    <property type="entry name" value="SerRS_core"/>
    <property type="match status" value="1"/>
</dbReference>
<dbReference type="FunFam" id="3.30.930.10:FF:000048">
    <property type="entry name" value="Serine--tRNA ligase"/>
    <property type="match status" value="1"/>
</dbReference>
<dbReference type="Gene3D" id="3.30.930.10">
    <property type="entry name" value="Bira Bifunctional Protein, Domain 2"/>
    <property type="match status" value="1"/>
</dbReference>
<dbReference type="Gene3D" id="1.10.287.40">
    <property type="entry name" value="Serine-tRNA synthetase, tRNA binding domain"/>
    <property type="match status" value="1"/>
</dbReference>
<dbReference type="HAMAP" id="MF_00176">
    <property type="entry name" value="Ser_tRNA_synth_type1"/>
    <property type="match status" value="1"/>
</dbReference>
<dbReference type="InterPro" id="IPR002314">
    <property type="entry name" value="aa-tRNA-synt_IIb"/>
</dbReference>
<dbReference type="InterPro" id="IPR006195">
    <property type="entry name" value="aa-tRNA-synth_II"/>
</dbReference>
<dbReference type="InterPro" id="IPR045864">
    <property type="entry name" value="aa-tRNA-synth_II/BPL/LPL"/>
</dbReference>
<dbReference type="InterPro" id="IPR002317">
    <property type="entry name" value="Ser-tRNA-ligase_type_1"/>
</dbReference>
<dbReference type="InterPro" id="IPR015866">
    <property type="entry name" value="Ser-tRNA-synth_1_N"/>
</dbReference>
<dbReference type="InterPro" id="IPR042103">
    <property type="entry name" value="SerRS_1_N_sf"/>
</dbReference>
<dbReference type="InterPro" id="IPR033729">
    <property type="entry name" value="SerRS_core"/>
</dbReference>
<dbReference type="InterPro" id="IPR010978">
    <property type="entry name" value="tRNA-bd_arm"/>
</dbReference>
<dbReference type="NCBIfam" id="TIGR00414">
    <property type="entry name" value="serS"/>
    <property type="match status" value="1"/>
</dbReference>
<dbReference type="PANTHER" id="PTHR11778">
    <property type="entry name" value="SERYL-TRNA SYNTHETASE"/>
    <property type="match status" value="1"/>
</dbReference>
<dbReference type="Pfam" id="PF02403">
    <property type="entry name" value="Seryl_tRNA_N"/>
    <property type="match status" value="1"/>
</dbReference>
<dbReference type="Pfam" id="PF00587">
    <property type="entry name" value="tRNA-synt_2b"/>
    <property type="match status" value="1"/>
</dbReference>
<dbReference type="PIRSF" id="PIRSF001529">
    <property type="entry name" value="Ser-tRNA-synth_IIa"/>
    <property type="match status" value="1"/>
</dbReference>
<dbReference type="PRINTS" id="PR00981">
    <property type="entry name" value="TRNASYNTHSER"/>
</dbReference>
<dbReference type="SUPFAM" id="SSF55681">
    <property type="entry name" value="Class II aaRS and biotin synthetases"/>
    <property type="match status" value="1"/>
</dbReference>
<dbReference type="SUPFAM" id="SSF46589">
    <property type="entry name" value="tRNA-binding arm"/>
    <property type="match status" value="1"/>
</dbReference>
<dbReference type="PROSITE" id="PS50862">
    <property type="entry name" value="AA_TRNA_LIGASE_II"/>
    <property type="match status" value="1"/>
</dbReference>
<accession>Q9UZ21</accession>
<accession>G8ZHE1</accession>
<sequence>MLDIKLIRENPELVKNDLKKRGELEKIKWIDEILKLDAEWRAKLKEINKLRHERNKIAIEIGKRRKKGEPVEELLAKSKEIVKRIESLEKEVEELKKKIDYYLWRLPNITHPSVPIGESEEDNVPIRFWGKARVWEGHLERFLEQSQGKMEYEVLEWRPKLHVDLLEILGGADFARAAKVSGSRFYYLLNEIVILDLALIRFALDELIKKGFTPVIPPYMVRRFVEEGSTTFEDFEDVIYKVEGEDLYLIPTAEHPLAGMHANEILDGKDLPLLYVGISPCFRKEAGTAGKDTKGIFRVHQFHKVEQFVYSRPEESWEWHERIIRNAEELFQKLEIPYRVVNICTGDLGYVAAKKYDIEAWMPGQGRFREVVSASNCTDWQARRLNIRFRDRTDEKPRYVHTLNSTAIATSRAIVAILENHQEEDGTVKIPKVLWKYTGFKEIVPVEKKERCCSS</sequence>
<name>SYS_PYRAB</name>
<evidence type="ECO:0000255" key="1">
    <source>
        <dbReference type="HAMAP-Rule" id="MF_00176"/>
    </source>
</evidence>
<comment type="function">
    <text evidence="1">Catalyzes the attachment of serine to tRNA(Ser). Is also able to aminoacylate tRNA(Sec) with serine, to form the misacylated tRNA L-seryl-tRNA(Sec), which will be further converted into selenocysteinyl-tRNA(Sec).</text>
</comment>
<comment type="catalytic activity">
    <reaction evidence="1">
        <text>tRNA(Ser) + L-serine + ATP = L-seryl-tRNA(Ser) + AMP + diphosphate + H(+)</text>
        <dbReference type="Rhea" id="RHEA:12292"/>
        <dbReference type="Rhea" id="RHEA-COMP:9669"/>
        <dbReference type="Rhea" id="RHEA-COMP:9703"/>
        <dbReference type="ChEBI" id="CHEBI:15378"/>
        <dbReference type="ChEBI" id="CHEBI:30616"/>
        <dbReference type="ChEBI" id="CHEBI:33019"/>
        <dbReference type="ChEBI" id="CHEBI:33384"/>
        <dbReference type="ChEBI" id="CHEBI:78442"/>
        <dbReference type="ChEBI" id="CHEBI:78533"/>
        <dbReference type="ChEBI" id="CHEBI:456215"/>
        <dbReference type="EC" id="6.1.1.11"/>
    </reaction>
</comment>
<comment type="catalytic activity">
    <reaction evidence="1">
        <text>tRNA(Sec) + L-serine + ATP = L-seryl-tRNA(Sec) + AMP + diphosphate + H(+)</text>
        <dbReference type="Rhea" id="RHEA:42580"/>
        <dbReference type="Rhea" id="RHEA-COMP:9742"/>
        <dbReference type="Rhea" id="RHEA-COMP:10128"/>
        <dbReference type="ChEBI" id="CHEBI:15378"/>
        <dbReference type="ChEBI" id="CHEBI:30616"/>
        <dbReference type="ChEBI" id="CHEBI:33019"/>
        <dbReference type="ChEBI" id="CHEBI:33384"/>
        <dbReference type="ChEBI" id="CHEBI:78442"/>
        <dbReference type="ChEBI" id="CHEBI:78533"/>
        <dbReference type="ChEBI" id="CHEBI:456215"/>
        <dbReference type="EC" id="6.1.1.11"/>
    </reaction>
</comment>
<comment type="pathway">
    <text evidence="1">Aminoacyl-tRNA biosynthesis; selenocysteinyl-tRNA(Sec) biosynthesis; L-seryl-tRNA(Sec) from L-serine and tRNA(Sec): step 1/1.</text>
</comment>
<comment type="subunit">
    <text evidence="1">Homodimer. The tRNA molecule binds across the dimer.</text>
</comment>
<comment type="subcellular location">
    <subcellularLocation>
        <location evidence="1">Cytoplasm</location>
    </subcellularLocation>
</comment>
<comment type="domain">
    <text evidence="1">Consists of two distinct domains, a catalytic core and a N-terminal extension that is involved in tRNA binding.</text>
</comment>
<comment type="similarity">
    <text evidence="1">Belongs to the class-II aminoacyl-tRNA synthetase family. Type-1 seryl-tRNA synthetase subfamily.</text>
</comment>
<proteinExistence type="inferred from homology"/>
<reference key="1">
    <citation type="journal article" date="2003" name="Mol. Microbiol.">
        <title>An integrated analysis of the genome of the hyperthermophilic archaeon Pyrococcus abyssi.</title>
        <authorList>
            <person name="Cohen G.N."/>
            <person name="Barbe V."/>
            <person name="Flament D."/>
            <person name="Galperin M."/>
            <person name="Heilig R."/>
            <person name="Lecompte O."/>
            <person name="Poch O."/>
            <person name="Prieur D."/>
            <person name="Querellou J."/>
            <person name="Ripp R."/>
            <person name="Thierry J.-C."/>
            <person name="Van der Oost J."/>
            <person name="Weissenbach J."/>
            <person name="Zivanovic Y."/>
            <person name="Forterre P."/>
        </authorList>
    </citation>
    <scope>NUCLEOTIDE SEQUENCE [LARGE SCALE GENOMIC DNA]</scope>
    <source>
        <strain>GE5 / Orsay</strain>
    </source>
</reference>
<reference key="2">
    <citation type="journal article" date="2012" name="Curr. Microbiol.">
        <title>Re-annotation of two hyperthermophilic archaea Pyrococcus abyssi GE5 and Pyrococcus furiosus DSM 3638.</title>
        <authorList>
            <person name="Gao J."/>
            <person name="Wang J."/>
        </authorList>
    </citation>
    <scope>GENOME REANNOTATION</scope>
    <source>
        <strain>GE5 / Orsay</strain>
    </source>
</reference>
<protein>
    <recommendedName>
        <fullName evidence="1">Serine--tRNA ligase</fullName>
        <ecNumber evidence="1">6.1.1.11</ecNumber>
    </recommendedName>
    <alternativeName>
        <fullName evidence="1">Seryl-tRNA synthetase</fullName>
        <shortName evidence="1">SerRS</shortName>
    </alternativeName>
    <alternativeName>
        <fullName evidence="1">Seryl-tRNA(Ser/Sec) synthetase</fullName>
    </alternativeName>
</protein>
<feature type="chain" id="PRO_0000122179" description="Serine--tRNA ligase">
    <location>
        <begin position="1"/>
        <end position="455"/>
    </location>
</feature>
<feature type="binding site" evidence="1">
    <location>
        <begin position="252"/>
        <end position="254"/>
    </location>
    <ligand>
        <name>L-serine</name>
        <dbReference type="ChEBI" id="CHEBI:33384"/>
    </ligand>
</feature>
<feature type="binding site" evidence="1">
    <location>
        <begin position="283"/>
        <end position="285"/>
    </location>
    <ligand>
        <name>ATP</name>
        <dbReference type="ChEBI" id="CHEBI:30616"/>
    </ligand>
</feature>
<feature type="binding site" evidence="1">
    <location>
        <position position="299"/>
    </location>
    <ligand>
        <name>ATP</name>
        <dbReference type="ChEBI" id="CHEBI:30616"/>
    </ligand>
</feature>
<feature type="binding site" evidence="1">
    <location>
        <position position="306"/>
    </location>
    <ligand>
        <name>L-serine</name>
        <dbReference type="ChEBI" id="CHEBI:33384"/>
    </ligand>
</feature>
<feature type="binding site" evidence="1">
    <location>
        <begin position="370"/>
        <end position="373"/>
    </location>
    <ligand>
        <name>ATP</name>
        <dbReference type="ChEBI" id="CHEBI:30616"/>
    </ligand>
</feature>
<feature type="binding site" evidence="1">
    <location>
        <position position="406"/>
    </location>
    <ligand>
        <name>L-serine</name>
        <dbReference type="ChEBI" id="CHEBI:33384"/>
    </ligand>
</feature>
<gene>
    <name evidence="1" type="primary">serS</name>
    <name type="ordered locus">PYRAB13360</name>
    <name type="ORF">PAB0881</name>
</gene>
<keyword id="KW-0030">Aminoacyl-tRNA synthetase</keyword>
<keyword id="KW-0067">ATP-binding</keyword>
<keyword id="KW-0963">Cytoplasm</keyword>
<keyword id="KW-0436">Ligase</keyword>
<keyword id="KW-0547">Nucleotide-binding</keyword>
<keyword id="KW-0648">Protein biosynthesis</keyword>
<organism>
    <name type="scientific">Pyrococcus abyssi (strain GE5 / Orsay)</name>
    <dbReference type="NCBI Taxonomy" id="272844"/>
    <lineage>
        <taxon>Archaea</taxon>
        <taxon>Methanobacteriati</taxon>
        <taxon>Methanobacteriota</taxon>
        <taxon>Thermococci</taxon>
        <taxon>Thermococcales</taxon>
        <taxon>Thermococcaceae</taxon>
        <taxon>Pyrococcus</taxon>
    </lineage>
</organism>